<evidence type="ECO:0000250" key="1"/>
<evidence type="ECO:0000255" key="2"/>
<evidence type="ECO:0000305" key="3"/>
<accession>Q98224</accession>
<accession>O11329</accession>
<protein>
    <recommendedName>
        <fullName>Probable metalloendopeptidase G1-type</fullName>
        <ecNumber>3.4.24.-</ecNumber>
    </recommendedName>
</protein>
<feature type="chain" id="PRO_0000218449" description="Probable metalloendopeptidase G1-type">
    <location>
        <begin position="1"/>
        <end position="593"/>
    </location>
</feature>
<feature type="active site" evidence="2">
    <location>
        <position position="44"/>
    </location>
</feature>
<feature type="binding site" evidence="2">
    <location>
        <position position="41"/>
    </location>
    <ligand>
        <name>Zn(2+)</name>
        <dbReference type="ChEBI" id="CHEBI:29105"/>
        <note>catalytic</note>
    </ligand>
</feature>
<feature type="binding site" evidence="2">
    <location>
        <position position="45"/>
    </location>
    <ligand>
        <name>Zn(2+)</name>
        <dbReference type="ChEBI" id="CHEBI:29105"/>
        <note>catalytic</note>
    </ligand>
</feature>
<gene>
    <name type="ordered locus">MC056L</name>
    <name type="ORF">B2'-17R</name>
</gene>
<organismHost>
    <name type="scientific">Homo sapiens</name>
    <name type="common">Human</name>
    <dbReference type="NCBI Taxonomy" id="9606"/>
</organismHost>
<keyword id="KW-0378">Hydrolase</keyword>
<keyword id="KW-0479">Metal-binding</keyword>
<keyword id="KW-0482">Metalloprotease</keyword>
<keyword id="KW-0645">Protease</keyword>
<keyword id="KW-1185">Reference proteome</keyword>
<keyword id="KW-0862">Zinc</keyword>
<dbReference type="EC" id="3.4.24.-"/>
<dbReference type="EMBL" id="U60315">
    <property type="protein sequence ID" value="AAC55184.1"/>
    <property type="molecule type" value="Genomic_DNA"/>
</dbReference>
<dbReference type="EMBL" id="U86909">
    <property type="protein sequence ID" value="AAB57961.1"/>
    <property type="molecule type" value="Genomic_DNA"/>
</dbReference>
<dbReference type="PIR" id="T30658">
    <property type="entry name" value="T30658"/>
</dbReference>
<dbReference type="RefSeq" id="NP_044007.1">
    <property type="nucleotide sequence ID" value="NC_001731.1"/>
</dbReference>
<dbReference type="SMR" id="Q98224"/>
<dbReference type="GeneID" id="1487075"/>
<dbReference type="KEGG" id="vg:1487075"/>
<dbReference type="OrthoDB" id="1933at10239"/>
<dbReference type="Proteomes" id="UP000000869">
    <property type="component" value="Genome"/>
</dbReference>
<dbReference type="GO" id="GO:0004222">
    <property type="term" value="F:metalloendopeptidase activity"/>
    <property type="evidence" value="ECO:0007669"/>
    <property type="project" value="InterPro"/>
</dbReference>
<dbReference type="GO" id="GO:0008270">
    <property type="term" value="F:zinc ion binding"/>
    <property type="evidence" value="ECO:0007669"/>
    <property type="project" value="InterPro"/>
</dbReference>
<dbReference type="GO" id="GO:0006508">
    <property type="term" value="P:proteolysis"/>
    <property type="evidence" value="ECO:0007669"/>
    <property type="project" value="UniProtKB-KW"/>
</dbReference>
<dbReference type="GO" id="GO:0019058">
    <property type="term" value="P:viral life cycle"/>
    <property type="evidence" value="ECO:0007669"/>
    <property type="project" value="InterPro"/>
</dbReference>
<dbReference type="InterPro" id="IPR011249">
    <property type="entry name" value="Metalloenz_LuxS/M16"/>
</dbReference>
<dbReference type="InterPro" id="IPR005072">
    <property type="entry name" value="Peptidase_M44"/>
</dbReference>
<dbReference type="Pfam" id="PF03410">
    <property type="entry name" value="Peptidase_M44"/>
    <property type="match status" value="1"/>
</dbReference>
<dbReference type="PIRSF" id="PIRSF015679">
    <property type="entry name" value="Peptidase_M44"/>
    <property type="match status" value="1"/>
</dbReference>
<dbReference type="SUPFAM" id="SSF63411">
    <property type="entry name" value="LuxS/MPP-like metallohydrolase"/>
    <property type="match status" value="1"/>
</dbReference>
<reference key="1">
    <citation type="journal article" date="1996" name="Science">
        <title>Genome sequence of a human tumorigenic poxvirus: prediction of specific host response-evasion genes.</title>
        <authorList>
            <person name="Senkevich T.G."/>
            <person name="Bugert J.J."/>
            <person name="Sisler J.R."/>
            <person name="Koonin E.V."/>
            <person name="Darai G."/>
            <person name="Moss B."/>
        </authorList>
    </citation>
    <scope>NUCLEOTIDE SEQUENCE [LARGE SCALE GENOMIC DNA]</scope>
</reference>
<reference key="2">
    <citation type="submission" date="1997-05" db="EMBL/GenBank/DDBJ databases">
        <title>A random DNA sequencing, computer-based approach for the generation of a gene map of Molluscum contagiosum virus.</title>
        <authorList>
            <person name="Moratilla M."/>
            <person name="Agromayor M."/>
            <person name="Nunez A."/>
            <person name="Funes J.M."/>
            <person name="Varas A.J."/>
            <person name="Lopez-Estebaranz J.L."/>
            <person name="Esteban M."/>
            <person name="Martin-Gallardo A."/>
        </authorList>
    </citation>
    <scope>NUCLEOTIDE SEQUENCE [GENOMIC DNA] OF 206-392</scope>
</reference>
<name>PG085_MCV1</name>
<comment type="function">
    <text evidence="1">Seems to be involved in viral proteins maturation by cleavage at Ala-Gly-|-Xaa motifs.</text>
</comment>
<comment type="cofactor">
    <cofactor evidence="3">
        <name>Zn(2+)</name>
        <dbReference type="ChEBI" id="CHEBI:29105"/>
    </cofactor>
    <text evidence="3">Binds 1 zinc ion.</text>
</comment>
<comment type="similarity">
    <text evidence="3">Belongs to the peptidase M44 family.</text>
</comment>
<organism>
    <name type="scientific">Molluscum contagiosum virus subtype 1</name>
    <name type="common">MOCV</name>
    <name type="synonym">MCVI</name>
    <dbReference type="NCBI Taxonomy" id="10280"/>
    <lineage>
        <taxon>Viruses</taxon>
        <taxon>Varidnaviria</taxon>
        <taxon>Bamfordvirae</taxon>
        <taxon>Nucleocytoviricota</taxon>
        <taxon>Pokkesviricetes</taxon>
        <taxon>Chitovirales</taxon>
        <taxon>Poxviridae</taxon>
        <taxon>Chordopoxvirinae</taxon>
        <taxon>Molluscipoxvirus</taxon>
        <taxon>Molluscum contagiosum virus</taxon>
    </lineage>
</organism>
<proteinExistence type="inferred from homology"/>
<sequence length="593" mass="68420">MILLENGVRVFPKPGMGKDIYIGLANFGFENDVPELLGVAHLLEHILISFDYTRFVANASTARTYMSFWCRALRAEDYLAALETAVSWFFARGALRTDFSRVRIRNYVRELENEYYFRNEVFHCMDILTFLGGGDLYNGGRLSMLEQLDAVRELLGKRMRRLAGPNVVIFVRELSPAALALLERSFGTLPRFPSTIPATRLGSIHNKAVLVPAPFYALLIQVDNTVENVLAVICLAESYHFVDYETLGERLYVSFAFVHEQDCEAFLRNVGELRFEPAPRVELNYSDDYVMNLYVNFPWLQHDLADYLYTLNADCVPLLRGLEENLRRSVRERQLVVVYPSFSPSLFNSRDRQDHRLLVLDVDLARSAGPARVPRTFRRQPRAEVFVRYGDPALLDYVAFALARPRAAALRRLPRGVRLAHGFSHADMHEIMASETFIKYSRSRPAALFQYIFLAFFATGRSIAEILERREALVSFDARRCVNRLVFAKRARYDVVTKSSFVCGVLRGPRLSEAALTRAMWELKRKGLLYSLEHTRMHAKHTFYVFAFSIYPEQVYRYFARWQLVSKHCCVVSMRGEREDYSALRKEVVVNFV</sequence>